<organism>
    <name type="scientific">Acidithiobacillus ferrooxidans (strain ATCC 23270 / DSM 14882 / CIP 104768 / NCIMB 8455)</name>
    <name type="common">Ferrobacillus ferrooxidans (strain ATCC 23270)</name>
    <dbReference type="NCBI Taxonomy" id="243159"/>
    <lineage>
        <taxon>Bacteria</taxon>
        <taxon>Pseudomonadati</taxon>
        <taxon>Pseudomonadota</taxon>
        <taxon>Acidithiobacillia</taxon>
        <taxon>Acidithiobacillales</taxon>
        <taxon>Acidithiobacillaceae</taxon>
        <taxon>Acidithiobacillus</taxon>
    </lineage>
</organism>
<reference key="1">
    <citation type="journal article" date="2008" name="BMC Genomics">
        <title>Acidithiobacillus ferrooxidans metabolism: from genome sequence to industrial applications.</title>
        <authorList>
            <person name="Valdes J."/>
            <person name="Pedroso I."/>
            <person name="Quatrini R."/>
            <person name="Dodson R.J."/>
            <person name="Tettelin H."/>
            <person name="Blake R. II"/>
            <person name="Eisen J.A."/>
            <person name="Holmes D.S."/>
        </authorList>
    </citation>
    <scope>NUCLEOTIDE SEQUENCE [LARGE SCALE GENOMIC DNA]</scope>
    <source>
        <strain>ATCC 23270 / DSM 14882 / CIP 104768 / NCIMB 8455</strain>
    </source>
</reference>
<protein>
    <recommendedName>
        <fullName evidence="1">Small ribosomal subunit protein uS15</fullName>
    </recommendedName>
    <alternativeName>
        <fullName evidence="2">30S ribosomal protein S15</fullName>
    </alternativeName>
</protein>
<gene>
    <name evidence="1" type="primary">rpsO</name>
    <name type="ordered locus">AFE_0394</name>
</gene>
<keyword id="KW-1185">Reference proteome</keyword>
<keyword id="KW-0687">Ribonucleoprotein</keyword>
<keyword id="KW-0689">Ribosomal protein</keyword>
<keyword id="KW-0694">RNA-binding</keyword>
<keyword id="KW-0699">rRNA-binding</keyword>
<accession>B7J4D7</accession>
<feature type="chain" id="PRO_1000143063" description="Small ribosomal subunit protein uS15">
    <location>
        <begin position="1"/>
        <end position="89"/>
    </location>
</feature>
<name>RS15_ACIF2</name>
<proteinExistence type="inferred from homology"/>
<sequence>MALSHDIKAEVVQGYATHVGDTGSPEVQVALLTTRIEGLTDHFKVNKHDHHSRQGLLRMVGQRRKLLDYLKKRDVNRYRTLIERLGLRK</sequence>
<dbReference type="EMBL" id="CP001219">
    <property type="protein sequence ID" value="ACK80917.1"/>
    <property type="molecule type" value="Genomic_DNA"/>
</dbReference>
<dbReference type="RefSeq" id="WP_009567341.1">
    <property type="nucleotide sequence ID" value="NC_011761.1"/>
</dbReference>
<dbReference type="SMR" id="B7J4D7"/>
<dbReference type="STRING" id="243159.AFE_0394"/>
<dbReference type="PaxDb" id="243159-AFE_0394"/>
<dbReference type="GeneID" id="65279770"/>
<dbReference type="KEGG" id="afr:AFE_0394"/>
<dbReference type="eggNOG" id="COG0184">
    <property type="taxonomic scope" value="Bacteria"/>
</dbReference>
<dbReference type="HOGENOM" id="CLU_148518_0_0_6"/>
<dbReference type="Proteomes" id="UP000001362">
    <property type="component" value="Chromosome"/>
</dbReference>
<dbReference type="GO" id="GO:0022627">
    <property type="term" value="C:cytosolic small ribosomal subunit"/>
    <property type="evidence" value="ECO:0007669"/>
    <property type="project" value="TreeGrafter"/>
</dbReference>
<dbReference type="GO" id="GO:0019843">
    <property type="term" value="F:rRNA binding"/>
    <property type="evidence" value="ECO:0007669"/>
    <property type="project" value="UniProtKB-UniRule"/>
</dbReference>
<dbReference type="GO" id="GO:0003735">
    <property type="term" value="F:structural constituent of ribosome"/>
    <property type="evidence" value="ECO:0007669"/>
    <property type="project" value="InterPro"/>
</dbReference>
<dbReference type="GO" id="GO:0006412">
    <property type="term" value="P:translation"/>
    <property type="evidence" value="ECO:0007669"/>
    <property type="project" value="UniProtKB-UniRule"/>
</dbReference>
<dbReference type="CDD" id="cd00353">
    <property type="entry name" value="Ribosomal_S15p_S13e"/>
    <property type="match status" value="1"/>
</dbReference>
<dbReference type="FunFam" id="1.10.287.10:FF:000002">
    <property type="entry name" value="30S ribosomal protein S15"/>
    <property type="match status" value="1"/>
</dbReference>
<dbReference type="Gene3D" id="6.10.250.3130">
    <property type="match status" value="1"/>
</dbReference>
<dbReference type="Gene3D" id="1.10.287.10">
    <property type="entry name" value="S15/NS1, RNA-binding"/>
    <property type="match status" value="1"/>
</dbReference>
<dbReference type="HAMAP" id="MF_01343_B">
    <property type="entry name" value="Ribosomal_uS15_B"/>
    <property type="match status" value="1"/>
</dbReference>
<dbReference type="InterPro" id="IPR000589">
    <property type="entry name" value="Ribosomal_uS15"/>
</dbReference>
<dbReference type="InterPro" id="IPR005290">
    <property type="entry name" value="Ribosomal_uS15_bac-type"/>
</dbReference>
<dbReference type="InterPro" id="IPR009068">
    <property type="entry name" value="uS15_NS1_RNA-bd_sf"/>
</dbReference>
<dbReference type="NCBIfam" id="TIGR00952">
    <property type="entry name" value="S15_bact"/>
    <property type="match status" value="1"/>
</dbReference>
<dbReference type="PANTHER" id="PTHR23321">
    <property type="entry name" value="RIBOSOMAL PROTEIN S15, BACTERIAL AND ORGANELLAR"/>
    <property type="match status" value="1"/>
</dbReference>
<dbReference type="PANTHER" id="PTHR23321:SF26">
    <property type="entry name" value="SMALL RIBOSOMAL SUBUNIT PROTEIN US15M"/>
    <property type="match status" value="1"/>
</dbReference>
<dbReference type="Pfam" id="PF00312">
    <property type="entry name" value="Ribosomal_S15"/>
    <property type="match status" value="1"/>
</dbReference>
<dbReference type="SMART" id="SM01387">
    <property type="entry name" value="Ribosomal_S15"/>
    <property type="match status" value="1"/>
</dbReference>
<dbReference type="SUPFAM" id="SSF47060">
    <property type="entry name" value="S15/NS1 RNA-binding domain"/>
    <property type="match status" value="1"/>
</dbReference>
<dbReference type="PROSITE" id="PS00362">
    <property type="entry name" value="RIBOSOMAL_S15"/>
    <property type="match status" value="1"/>
</dbReference>
<evidence type="ECO:0000255" key="1">
    <source>
        <dbReference type="HAMAP-Rule" id="MF_01343"/>
    </source>
</evidence>
<evidence type="ECO:0000305" key="2"/>
<comment type="function">
    <text evidence="1">One of the primary rRNA binding proteins, it binds directly to 16S rRNA where it helps nucleate assembly of the platform of the 30S subunit by binding and bridging several RNA helices of the 16S rRNA.</text>
</comment>
<comment type="function">
    <text evidence="1">Forms an intersubunit bridge (bridge B4) with the 23S rRNA of the 50S subunit in the ribosome.</text>
</comment>
<comment type="subunit">
    <text evidence="1">Part of the 30S ribosomal subunit. Forms a bridge to the 50S subunit in the 70S ribosome, contacting the 23S rRNA.</text>
</comment>
<comment type="similarity">
    <text evidence="1">Belongs to the universal ribosomal protein uS15 family.</text>
</comment>